<sequence>MKKKLLVPLILFLSITIAFLVQLKRNAQGEDIKALESALVGKPVPAKNLTELFENKTYTNELFQQGEPVLLNVWATWCPTCYAEHQYLNKLAKEGVRIIGLDYKDESPKAMKWLKDLGNPYQVVLKDEKGSFGLDLGVYGAPETFIVDGKGVIHYRYAGDVNEKVWTQTLKPIYDKLSEQQ</sequence>
<keyword id="KW-0997">Cell inner membrane</keyword>
<keyword id="KW-1003">Cell membrane</keyword>
<keyword id="KW-0201">Cytochrome c-type biogenesis</keyword>
<keyword id="KW-1015">Disulfide bond</keyword>
<keyword id="KW-0472">Membrane</keyword>
<keyword id="KW-0676">Redox-active center</keyword>
<keyword id="KW-1185">Reference proteome</keyword>
<keyword id="KW-0812">Transmembrane</keyword>
<keyword id="KW-1133">Transmembrane helix</keyword>
<protein>
    <recommendedName>
        <fullName>Thiol:disulfide interchange protein DsbE</fullName>
    </recommendedName>
    <alternativeName>
        <fullName>Cytochrome c biogenesis protein CcmG</fullName>
    </alternativeName>
</protein>
<name>DSBE_HAEIN</name>
<organism>
    <name type="scientific">Haemophilus influenzae (strain ATCC 51907 / DSM 11121 / KW20 / Rd)</name>
    <dbReference type="NCBI Taxonomy" id="71421"/>
    <lineage>
        <taxon>Bacteria</taxon>
        <taxon>Pseudomonadati</taxon>
        <taxon>Pseudomonadota</taxon>
        <taxon>Gammaproteobacteria</taxon>
        <taxon>Pasteurellales</taxon>
        <taxon>Pasteurellaceae</taxon>
        <taxon>Haemophilus</taxon>
    </lineage>
</organism>
<accession>P45038</accession>
<evidence type="ECO:0000250" key="1"/>
<evidence type="ECO:0000255" key="2"/>
<evidence type="ECO:0000255" key="3">
    <source>
        <dbReference type="PROSITE-ProRule" id="PRU00691"/>
    </source>
</evidence>
<evidence type="ECO:0000305" key="4"/>
<dbReference type="EMBL" id="L42023">
    <property type="protein sequence ID" value="AAC22752.1"/>
    <property type="molecule type" value="Genomic_DNA"/>
</dbReference>
<dbReference type="PIR" id="B64167">
    <property type="entry name" value="B64167"/>
</dbReference>
<dbReference type="RefSeq" id="NP_439252.1">
    <property type="nucleotide sequence ID" value="NC_000907.1"/>
</dbReference>
<dbReference type="SMR" id="P45038"/>
<dbReference type="STRING" id="71421.HI_1095"/>
<dbReference type="EnsemblBacteria" id="AAC22752">
    <property type="protein sequence ID" value="AAC22752"/>
    <property type="gene ID" value="HI_1095"/>
</dbReference>
<dbReference type="KEGG" id="hin:HI_1095"/>
<dbReference type="PATRIC" id="fig|71421.8.peg.1140"/>
<dbReference type="eggNOG" id="COG0526">
    <property type="taxonomic scope" value="Bacteria"/>
</dbReference>
<dbReference type="HOGENOM" id="CLU_042529_19_1_6"/>
<dbReference type="OrthoDB" id="9799347at2"/>
<dbReference type="PhylomeDB" id="P45038"/>
<dbReference type="BioCyc" id="HINF71421:G1GJ1-1130-MONOMER"/>
<dbReference type="Proteomes" id="UP000000579">
    <property type="component" value="Chromosome"/>
</dbReference>
<dbReference type="GO" id="GO:0030288">
    <property type="term" value="C:outer membrane-bounded periplasmic space"/>
    <property type="evidence" value="ECO:0007669"/>
    <property type="project" value="InterPro"/>
</dbReference>
<dbReference type="GO" id="GO:0005886">
    <property type="term" value="C:plasma membrane"/>
    <property type="evidence" value="ECO:0007669"/>
    <property type="project" value="UniProtKB-SubCell"/>
</dbReference>
<dbReference type="GO" id="GO:0015036">
    <property type="term" value="F:disulfide oxidoreductase activity"/>
    <property type="evidence" value="ECO:0007669"/>
    <property type="project" value="InterPro"/>
</dbReference>
<dbReference type="GO" id="GO:0017004">
    <property type="term" value="P:cytochrome complex assembly"/>
    <property type="evidence" value="ECO:0007669"/>
    <property type="project" value="UniProtKB-KW"/>
</dbReference>
<dbReference type="CDD" id="cd03010">
    <property type="entry name" value="TlpA_like_DsbE"/>
    <property type="match status" value="1"/>
</dbReference>
<dbReference type="Gene3D" id="3.40.30.10">
    <property type="entry name" value="Glutaredoxin"/>
    <property type="match status" value="1"/>
</dbReference>
<dbReference type="InterPro" id="IPR004799">
    <property type="entry name" value="Periplasmic_diS_OxRdtase_DsbE"/>
</dbReference>
<dbReference type="InterPro" id="IPR013740">
    <property type="entry name" value="Redoxin"/>
</dbReference>
<dbReference type="InterPro" id="IPR036249">
    <property type="entry name" value="Thioredoxin-like_sf"/>
</dbReference>
<dbReference type="InterPro" id="IPR017937">
    <property type="entry name" value="Thioredoxin_CS"/>
</dbReference>
<dbReference type="InterPro" id="IPR013766">
    <property type="entry name" value="Thioredoxin_domain"/>
</dbReference>
<dbReference type="InterPro" id="IPR050553">
    <property type="entry name" value="Thioredoxin_ResA/DsbE_sf"/>
</dbReference>
<dbReference type="NCBIfam" id="TIGR00385">
    <property type="entry name" value="dsbE"/>
    <property type="match status" value="1"/>
</dbReference>
<dbReference type="PANTHER" id="PTHR42852">
    <property type="entry name" value="THIOL:DISULFIDE INTERCHANGE PROTEIN DSBE"/>
    <property type="match status" value="1"/>
</dbReference>
<dbReference type="PANTHER" id="PTHR42852:SF6">
    <property type="entry name" value="THIOL:DISULFIDE INTERCHANGE PROTEIN DSBE"/>
    <property type="match status" value="1"/>
</dbReference>
<dbReference type="Pfam" id="PF08534">
    <property type="entry name" value="Redoxin"/>
    <property type="match status" value="1"/>
</dbReference>
<dbReference type="SUPFAM" id="SSF52833">
    <property type="entry name" value="Thioredoxin-like"/>
    <property type="match status" value="1"/>
</dbReference>
<dbReference type="PROSITE" id="PS00194">
    <property type="entry name" value="THIOREDOXIN_1"/>
    <property type="match status" value="1"/>
</dbReference>
<dbReference type="PROSITE" id="PS51352">
    <property type="entry name" value="THIOREDOXIN_2"/>
    <property type="match status" value="1"/>
</dbReference>
<feature type="chain" id="PRO_0000201295" description="Thiol:disulfide interchange protein DsbE">
    <location>
        <begin position="1"/>
        <end position="181"/>
    </location>
</feature>
<feature type="topological domain" description="Cytoplasmic" evidence="2">
    <location>
        <begin position="1"/>
        <end position="4"/>
    </location>
</feature>
<feature type="transmembrane region" description="Helical" evidence="2">
    <location>
        <begin position="5"/>
        <end position="23"/>
    </location>
</feature>
<feature type="topological domain" description="Periplasmic" evidence="2">
    <location>
        <begin position="24"/>
        <end position="181"/>
    </location>
</feature>
<feature type="domain" description="Thioredoxin" evidence="3">
    <location>
        <begin position="38"/>
        <end position="175"/>
    </location>
</feature>
<feature type="disulfide bond" description="Redox-active" evidence="3">
    <location>
        <begin position="78"/>
        <end position="81"/>
    </location>
</feature>
<proteinExistence type="inferred from homology"/>
<reference key="1">
    <citation type="journal article" date="1995" name="Science">
        <title>Whole-genome random sequencing and assembly of Haemophilus influenzae Rd.</title>
        <authorList>
            <person name="Fleischmann R.D."/>
            <person name="Adams M.D."/>
            <person name="White O."/>
            <person name="Clayton R.A."/>
            <person name="Kirkness E.F."/>
            <person name="Kerlavage A.R."/>
            <person name="Bult C.J."/>
            <person name="Tomb J.-F."/>
            <person name="Dougherty B.A."/>
            <person name="Merrick J.M."/>
            <person name="McKenney K."/>
            <person name="Sutton G.G."/>
            <person name="FitzHugh W."/>
            <person name="Fields C.A."/>
            <person name="Gocayne J.D."/>
            <person name="Scott J.D."/>
            <person name="Shirley R."/>
            <person name="Liu L.-I."/>
            <person name="Glodek A."/>
            <person name="Kelley J.M."/>
            <person name="Weidman J.F."/>
            <person name="Phillips C.A."/>
            <person name="Spriggs T."/>
            <person name="Hedblom E."/>
            <person name="Cotton M.D."/>
            <person name="Utterback T.R."/>
            <person name="Hanna M.C."/>
            <person name="Nguyen D.T."/>
            <person name="Saudek D.M."/>
            <person name="Brandon R.C."/>
            <person name="Fine L.D."/>
            <person name="Fritchman J.L."/>
            <person name="Fuhrmann J.L."/>
            <person name="Geoghagen N.S.M."/>
            <person name="Gnehm C.L."/>
            <person name="McDonald L.A."/>
            <person name="Small K.V."/>
            <person name="Fraser C.M."/>
            <person name="Smith H.O."/>
            <person name="Venter J.C."/>
        </authorList>
    </citation>
    <scope>NUCLEOTIDE SEQUENCE [LARGE SCALE GENOMIC DNA]</scope>
    <source>
        <strain>ATCC 51907 / DSM 11121 / KW20 / Rd</strain>
    </source>
</reference>
<comment type="function">
    <text evidence="1">Involved in disulfide bond formation. Catalyzes a late, reductive step in the assembly of periplasmic c-type cytochromes, probably the reduction of disulfide bonds of the apocytochrome c to allow covalent linkage with the heme. Possible subunit of a heme lyase (By similarity).</text>
</comment>
<comment type="subcellular location">
    <subcellularLocation>
        <location evidence="1">Cell inner membrane</location>
        <topology evidence="1">Single-pass membrane protein</topology>
        <orientation evidence="1">Periplasmic side</orientation>
    </subcellularLocation>
</comment>
<comment type="similarity">
    <text evidence="4">Belongs to the thioredoxin family. DsbE subfamily.</text>
</comment>
<gene>
    <name type="primary">dsbE</name>
    <name type="synonym">ccmG</name>
    <name type="ordered locus">HI_1095</name>
</gene>